<reference key="1">
    <citation type="submission" date="2009-01" db="EMBL/GenBank/DDBJ databases">
        <title>Complete sequence of Clostridium cellulolyticum H10.</title>
        <authorList>
            <consortium name="US DOE Joint Genome Institute"/>
            <person name="Lucas S."/>
            <person name="Copeland A."/>
            <person name="Lapidus A."/>
            <person name="Glavina del Rio T."/>
            <person name="Dalin E."/>
            <person name="Tice H."/>
            <person name="Bruce D."/>
            <person name="Goodwin L."/>
            <person name="Pitluck S."/>
            <person name="Chertkov O."/>
            <person name="Saunders E."/>
            <person name="Brettin T."/>
            <person name="Detter J.C."/>
            <person name="Han C."/>
            <person name="Larimer F."/>
            <person name="Land M."/>
            <person name="Hauser L."/>
            <person name="Kyrpides N."/>
            <person name="Ivanova N."/>
            <person name="Zhou J."/>
            <person name="Richardson P."/>
        </authorList>
    </citation>
    <scope>NUCLEOTIDE SEQUENCE [LARGE SCALE GENOMIC DNA]</scope>
    <source>
        <strain>ATCC 35319 / DSM 5812 / JCM 6584 / H10</strain>
    </source>
</reference>
<protein>
    <recommendedName>
        <fullName evidence="1">tRNA pseudouridine synthase A</fullName>
        <ecNumber evidence="1">5.4.99.12</ecNumber>
    </recommendedName>
    <alternativeName>
        <fullName evidence="1">tRNA pseudouridine(38-40) synthase</fullName>
    </alternativeName>
    <alternativeName>
        <fullName evidence="1">tRNA pseudouridylate synthase I</fullName>
    </alternativeName>
    <alternativeName>
        <fullName evidence="1">tRNA-uridine isomerase I</fullName>
    </alternativeName>
</protein>
<dbReference type="EC" id="5.4.99.12" evidence="1"/>
<dbReference type="EMBL" id="CP001348">
    <property type="protein sequence ID" value="ACL75171.1"/>
    <property type="molecule type" value="Genomic_DNA"/>
</dbReference>
<dbReference type="RefSeq" id="WP_015924333.1">
    <property type="nucleotide sequence ID" value="NC_011898.1"/>
</dbReference>
<dbReference type="SMR" id="B8I814"/>
<dbReference type="STRING" id="394503.Ccel_0793"/>
<dbReference type="KEGG" id="cce:Ccel_0793"/>
<dbReference type="eggNOG" id="COG0101">
    <property type="taxonomic scope" value="Bacteria"/>
</dbReference>
<dbReference type="HOGENOM" id="CLU_014673_0_1_9"/>
<dbReference type="OrthoDB" id="9811823at2"/>
<dbReference type="Proteomes" id="UP000001349">
    <property type="component" value="Chromosome"/>
</dbReference>
<dbReference type="GO" id="GO:0003723">
    <property type="term" value="F:RNA binding"/>
    <property type="evidence" value="ECO:0007669"/>
    <property type="project" value="InterPro"/>
</dbReference>
<dbReference type="GO" id="GO:0160147">
    <property type="term" value="F:tRNA pseudouridine(38-40) synthase activity"/>
    <property type="evidence" value="ECO:0007669"/>
    <property type="project" value="UniProtKB-EC"/>
</dbReference>
<dbReference type="GO" id="GO:0031119">
    <property type="term" value="P:tRNA pseudouridine synthesis"/>
    <property type="evidence" value="ECO:0007669"/>
    <property type="project" value="UniProtKB-UniRule"/>
</dbReference>
<dbReference type="CDD" id="cd02570">
    <property type="entry name" value="PseudoU_synth_EcTruA"/>
    <property type="match status" value="1"/>
</dbReference>
<dbReference type="FunFam" id="3.30.70.580:FF:000001">
    <property type="entry name" value="tRNA pseudouridine synthase A"/>
    <property type="match status" value="1"/>
</dbReference>
<dbReference type="Gene3D" id="3.30.70.660">
    <property type="entry name" value="Pseudouridine synthase I, catalytic domain, C-terminal subdomain"/>
    <property type="match status" value="1"/>
</dbReference>
<dbReference type="Gene3D" id="3.30.70.580">
    <property type="entry name" value="Pseudouridine synthase I, catalytic domain, N-terminal subdomain"/>
    <property type="match status" value="1"/>
</dbReference>
<dbReference type="HAMAP" id="MF_00171">
    <property type="entry name" value="TruA"/>
    <property type="match status" value="1"/>
</dbReference>
<dbReference type="InterPro" id="IPR020103">
    <property type="entry name" value="PsdUridine_synth_cat_dom_sf"/>
</dbReference>
<dbReference type="InterPro" id="IPR001406">
    <property type="entry name" value="PsdUridine_synth_TruA"/>
</dbReference>
<dbReference type="InterPro" id="IPR020097">
    <property type="entry name" value="PsdUridine_synth_TruA_a/b_dom"/>
</dbReference>
<dbReference type="InterPro" id="IPR020095">
    <property type="entry name" value="PsdUridine_synth_TruA_C"/>
</dbReference>
<dbReference type="InterPro" id="IPR020094">
    <property type="entry name" value="TruA/RsuA/RluB/E/F_N"/>
</dbReference>
<dbReference type="NCBIfam" id="TIGR00071">
    <property type="entry name" value="hisT_truA"/>
    <property type="match status" value="1"/>
</dbReference>
<dbReference type="PANTHER" id="PTHR11142">
    <property type="entry name" value="PSEUDOURIDYLATE SYNTHASE"/>
    <property type="match status" value="1"/>
</dbReference>
<dbReference type="PANTHER" id="PTHR11142:SF0">
    <property type="entry name" value="TRNA PSEUDOURIDINE SYNTHASE-LIKE 1"/>
    <property type="match status" value="1"/>
</dbReference>
<dbReference type="Pfam" id="PF01416">
    <property type="entry name" value="PseudoU_synth_1"/>
    <property type="match status" value="2"/>
</dbReference>
<dbReference type="PIRSF" id="PIRSF001430">
    <property type="entry name" value="tRNA_psdUrid_synth"/>
    <property type="match status" value="1"/>
</dbReference>
<dbReference type="SUPFAM" id="SSF55120">
    <property type="entry name" value="Pseudouridine synthase"/>
    <property type="match status" value="1"/>
</dbReference>
<comment type="function">
    <text evidence="1">Formation of pseudouridine at positions 38, 39 and 40 in the anticodon stem and loop of transfer RNAs.</text>
</comment>
<comment type="catalytic activity">
    <reaction evidence="1">
        <text>uridine(38/39/40) in tRNA = pseudouridine(38/39/40) in tRNA</text>
        <dbReference type="Rhea" id="RHEA:22376"/>
        <dbReference type="Rhea" id="RHEA-COMP:10085"/>
        <dbReference type="Rhea" id="RHEA-COMP:10087"/>
        <dbReference type="ChEBI" id="CHEBI:65314"/>
        <dbReference type="ChEBI" id="CHEBI:65315"/>
        <dbReference type="EC" id="5.4.99.12"/>
    </reaction>
</comment>
<comment type="subunit">
    <text evidence="1">Homodimer.</text>
</comment>
<comment type="similarity">
    <text evidence="1">Belongs to the tRNA pseudouridine synthase TruA family.</text>
</comment>
<sequence length="245" mass="27417">MRKIRLTIEYDGTNYHGWQIQKNAKTVQEVIQKALSKLLGEDVGVTGCSRTDVGVHAYGQVAHFLTDSKIPGDKFSYAINNLLPDDIVIKNSEEVPEEFHARYSAKGKKYRYLIYNSPHASAIMRNRSCHVRPELNVAEMQKAAGYFKGEHDFLAFQATGGQVRSTVREIYGMEVYVKEDNMISIEVSGNGFLYNMVRIIAGTLIYVGMGKLHESEIPGIIAGLDRTKAGKTAPAQGLYLVQIYY</sequence>
<proteinExistence type="inferred from homology"/>
<evidence type="ECO:0000255" key="1">
    <source>
        <dbReference type="HAMAP-Rule" id="MF_00171"/>
    </source>
</evidence>
<name>TRUA_RUMCH</name>
<organism>
    <name type="scientific">Ruminiclostridium cellulolyticum (strain ATCC 35319 / DSM 5812 / JCM 6584 / H10)</name>
    <name type="common">Clostridium cellulolyticum</name>
    <dbReference type="NCBI Taxonomy" id="394503"/>
    <lineage>
        <taxon>Bacteria</taxon>
        <taxon>Bacillati</taxon>
        <taxon>Bacillota</taxon>
        <taxon>Clostridia</taxon>
        <taxon>Eubacteriales</taxon>
        <taxon>Oscillospiraceae</taxon>
        <taxon>Ruminiclostridium</taxon>
    </lineage>
</organism>
<feature type="chain" id="PRO_1000194540" description="tRNA pseudouridine synthase A">
    <location>
        <begin position="1"/>
        <end position="245"/>
    </location>
</feature>
<feature type="active site" description="Nucleophile" evidence="1">
    <location>
        <position position="52"/>
    </location>
</feature>
<feature type="binding site" evidence="1">
    <location>
        <position position="110"/>
    </location>
    <ligand>
        <name>substrate</name>
    </ligand>
</feature>
<keyword id="KW-0413">Isomerase</keyword>
<keyword id="KW-1185">Reference proteome</keyword>
<keyword id="KW-0819">tRNA processing</keyword>
<gene>
    <name evidence="1" type="primary">truA</name>
    <name type="ordered locus">Ccel_0793</name>
</gene>
<accession>B8I814</accession>